<comment type="function">
    <text evidence="5">In the hair cortex, hair keratin intermediate filaments are embedded in an interfilamentous matrix, consisting of hair keratin-associated proteins (KRTAP), which are essential for the formation of a rigid and resistant hair shaft through their extensive disulfide bond cross-linking with abundant cysteine residues of hair keratins. The matrix proteins include the high-sulfur and high-glycine-tyrosine keratins.</text>
</comment>
<comment type="subunit">
    <text evidence="5">Interacts with hair keratins.</text>
</comment>
<comment type="tissue specificity">
    <text evidence="3">Expressed in skin during two hair growth cycles. Expression restricted to the cortical cells of hair follicles, appearing first in the cortical cells processing the flat nuclei located a few cells above the dermal papilla.</text>
</comment>
<comment type="similarity">
    <text evidence="1">Belongs to the KRTAP type 6 family.</text>
</comment>
<feature type="chain" id="PRO_0000361662" description="Keratin-associated protein 6-2">
    <location>
        <begin position="1"/>
        <end position="159"/>
    </location>
</feature>
<feature type="region of interest" description="66 X 2 AA repeats of G-[YCGS]" evidence="2">
    <location>
        <begin position="11"/>
        <end position="147"/>
    </location>
</feature>
<sequence length="159" mass="15262">MCCNYYGNSCGYGCGYGSGYGSGYGCGSGSGYGCGYGSGYGCGYGSGYGCGSGSGYGCGYGSGYGCGYGSGYGCGYGSGYGCGYGSGYGCGYGSGYGCGYGSGYGCGYGSGYGCGYGSGYGSGYGSGYGSGCGCGYGSYYRSGCCGYGPSCYRRCYSCC</sequence>
<keyword id="KW-0416">Keratin</keyword>
<keyword id="KW-1185">Reference proteome</keyword>
<keyword id="KW-0677">Repeat</keyword>
<protein>
    <recommendedName>
        <fullName evidence="7">Keratin-associated protein 6-2</fullName>
    </recommendedName>
    <alternativeName>
        <fullName evidence="6">High-glycine tyrosine keratin type II.4</fullName>
        <shortName evidence="4">HGTp type II.4</shortName>
        <shortName>HgtpII.4</shortName>
    </alternativeName>
</protein>
<name>KRA62_MOUSE</name>
<gene>
    <name evidence="7" type="primary">Krtap6-2</name>
</gene>
<organism>
    <name type="scientific">Mus musculus</name>
    <name type="common">Mouse</name>
    <dbReference type="NCBI Taxonomy" id="10090"/>
    <lineage>
        <taxon>Eukaryota</taxon>
        <taxon>Metazoa</taxon>
        <taxon>Chordata</taxon>
        <taxon>Craniata</taxon>
        <taxon>Vertebrata</taxon>
        <taxon>Euteleostomi</taxon>
        <taxon>Mammalia</taxon>
        <taxon>Eutheria</taxon>
        <taxon>Euarchontoglires</taxon>
        <taxon>Glires</taxon>
        <taxon>Rodentia</taxon>
        <taxon>Myomorpha</taxon>
        <taxon>Muroidea</taxon>
        <taxon>Muridae</taxon>
        <taxon>Murinae</taxon>
        <taxon>Mus</taxon>
        <taxon>Mus</taxon>
    </lineage>
</organism>
<evidence type="ECO:0000250" key="1">
    <source>
        <dbReference type="UniProtKB" id="Q3LI66"/>
    </source>
</evidence>
<evidence type="ECO:0000255" key="2"/>
<evidence type="ECO:0000269" key="3">
    <source>
    </source>
</evidence>
<evidence type="ECO:0000303" key="4">
    <source>
    </source>
</evidence>
<evidence type="ECO:0000305" key="5"/>
<evidence type="ECO:0000312" key="6">
    <source>
        <dbReference type="EMBL" id="BAA20281.1"/>
    </source>
</evidence>
<evidence type="ECO:0000312" key="7">
    <source>
        <dbReference type="MGI" id="MGI:1330280"/>
    </source>
</evidence>
<accession>O08884</accession>
<proteinExistence type="evidence at transcript level"/>
<reference evidence="5 6" key="1">
    <citation type="journal article" date="1997" name="J. Biol. Chem.">
        <title>Isolation and characterization of mouse high-glycine/tyrosine proteins.</title>
        <authorList>
            <person name="Aoki N."/>
            <person name="Ito K."/>
            <person name="Ito M."/>
        </authorList>
    </citation>
    <scope>NUCLEOTIDE SEQUENCE [MRNA]</scope>
    <scope>TISSUE SPECIFICITY</scope>
    <source>
        <tissue evidence="6">Skin</tissue>
    </source>
</reference>
<dbReference type="EMBL" id="D89902">
    <property type="protein sequence ID" value="BAA20281.1"/>
    <property type="molecule type" value="mRNA"/>
</dbReference>
<dbReference type="RefSeq" id="NP_034803.2">
    <property type="nucleotide sequence ID" value="NM_010673.2"/>
</dbReference>
<dbReference type="STRING" id="10090.ENSMUSP00000139661"/>
<dbReference type="iPTMnet" id="O08884"/>
<dbReference type="PhosphoSitePlus" id="O08884"/>
<dbReference type="PaxDb" id="10090-ENSMUSP00000139661"/>
<dbReference type="ProteomicsDB" id="264955"/>
<dbReference type="DNASU" id="16701"/>
<dbReference type="GeneID" id="16701"/>
<dbReference type="KEGG" id="mmu:16701"/>
<dbReference type="AGR" id="MGI:1330280"/>
<dbReference type="CTD" id="337967"/>
<dbReference type="MGI" id="MGI:1330280">
    <property type="gene designation" value="Krtap6-2"/>
</dbReference>
<dbReference type="InParanoid" id="O08884"/>
<dbReference type="BioGRID-ORCS" id="16701">
    <property type="hits" value="1 hit in 65 CRISPR screens"/>
</dbReference>
<dbReference type="PRO" id="PR:O08884"/>
<dbReference type="Proteomes" id="UP000000589">
    <property type="component" value="Unplaced"/>
</dbReference>
<dbReference type="RNAct" id="O08884">
    <property type="molecule type" value="protein"/>
</dbReference>
<dbReference type="GO" id="GO:0005882">
    <property type="term" value="C:intermediate filament"/>
    <property type="evidence" value="ECO:0007669"/>
    <property type="project" value="UniProtKB-KW"/>
</dbReference>
<dbReference type="PANTHER" id="PTHR31294">
    <property type="match status" value="1"/>
</dbReference>
<dbReference type="PANTHER" id="PTHR31294:SF8">
    <property type="entry name" value="KERATIN-ASSOCIATED PROTEIN 21-1-RELATED"/>
    <property type="match status" value="1"/>
</dbReference>